<proteinExistence type="inferred from homology"/>
<comment type="function">
    <text evidence="5">RNA-dependent RNA polymerase that plays an essential role in the virus replication.</text>
</comment>
<comment type="catalytic activity">
    <reaction evidence="1">
        <text>RNA(n) + a ribonucleoside 5'-triphosphate = RNA(n+1) + diphosphate</text>
        <dbReference type="Rhea" id="RHEA:21248"/>
        <dbReference type="Rhea" id="RHEA-COMP:14527"/>
        <dbReference type="Rhea" id="RHEA-COMP:17342"/>
        <dbReference type="ChEBI" id="CHEBI:33019"/>
        <dbReference type="ChEBI" id="CHEBI:61557"/>
        <dbReference type="ChEBI" id="CHEBI:140395"/>
        <dbReference type="EC" id="2.7.7.48"/>
    </reaction>
</comment>
<comment type="subcellular location">
    <subcellularLocation>
        <location evidence="3">Host membrane</location>
    </subcellularLocation>
</comment>
<comment type="miscellaneous">
    <text>Readthrough of the terminator UAG occurs at position 426.</text>
</comment>
<comment type="similarity">
    <text evidence="4">Belongs to the tombusviridae RNA polymerase family.</text>
</comment>
<keyword id="KW-1043">Host membrane</keyword>
<keyword id="KW-0472">Membrane</keyword>
<keyword id="KW-0547">Nucleotide-binding</keyword>
<keyword id="KW-0548">Nucleotidyltransferase</keyword>
<keyword id="KW-1185">Reference proteome</keyword>
<keyword id="KW-1159">RNA suppression of termination</keyword>
<keyword id="KW-0696">RNA-directed RNA polymerase</keyword>
<keyword id="KW-0808">Transferase</keyword>
<keyword id="KW-0693">Viral RNA replication</keyword>
<organismHost>
    <name type="scientific">Muhlenbergia</name>
    <dbReference type="NCBI Taxonomy" id="58090"/>
</organismHost>
<organismHost>
    <name type="scientific">Panicum virgatum</name>
    <name type="common">Blackwell switchgrass</name>
    <dbReference type="NCBI Taxonomy" id="38727"/>
</organismHost>
<sequence>MESLIQHILSATSSLSMPSVDSDKLQLLLTRFPQATLSWLSGIDGLSVHQFKVVATHVIKESYSHLSPSVAVLLAKPSDYYKLVVHGLTQKQWNEFDDKVTDAPRTAISWLYNQILVVGQPWMKSLNEGLKEYLPGWLHTCLRMLANLWFGAERVLHGISHAVSDITTYQPWMSCRRCVAHSPKESLLGEATTTSNPRESSWFSWLLCGGVVAATVYGFYKWVTITETIDRQDLAKQRPTHMQKCYEEVKARLEEESKGFIHDRMEDELTKIVLEPAEIDNDGKVLKSEVAQYLVKNHGRFVRSLVTMAKNEFAGVPKPTEANQLAVWRYLYRVCDKKGVNPSDTQKSISAALPFVFLPSAYDQDQAITMNCDDTKKVLERYADTFRHTTPLQKLVTNPLVGANWTAWARSIFISDPETGLRFAKXGCIEKWQGVQCKRTRVRHPRLRCHFKDRDPKVRSIYRIAGLGDQYEFGLHNNSAANLERGLAERVYMVKNYKTDFVASLDPAFCPAPEPVRGIFKRLDKYKKEIVRRVGRKSPITDEMFLSYYDGPQLTTYSKAVISLSERPVAVQDSYLKTFIKAEKLNLTLKTDPCPRVIQPRHPRYNVELGKYLKHIEHPIYKAIDRIWGGKTIFKGMNVEAMGAEIHKKMCKYSNPCAIGFDASRFDQHVSVEALRFEHSIYKSIHGYPELLSLLLKWQIHNQGTAHTNDGFFKYLVDGKRMSGDMNTSLGNCILASLIVKDLVDSLGVDAQLVNNGDDNVLICSVDDEEVVVKALYDHWMKYGFEVVAEQPVYITEQIEFCQMKPVFDGTQYVLVRNPTVTMSKDACSITPFYTANSARKWCRAVGEAGLSLTGGMPIKQAYYQCMIRNGINKGNIHKSKEFRYGLSYVLHHGKSDRKARPISAATRYSFYLAFGYTPDEQTALEGYYDSLELEWTESRLGIPARTPECLLLRLLPKIPLQPKSPTKPVQRTASKPDLPDSQWQQALAAPL</sequence>
<organism>
    <name type="scientific">Panicum mosaic virus (strain United States/Kansas 109S)</name>
    <name type="common">PMV</name>
    <dbReference type="NCBI Taxonomy" id="652599"/>
    <lineage>
        <taxon>Viruses</taxon>
        <taxon>Riboviria</taxon>
        <taxon>Orthornavirae</taxon>
        <taxon>Kitrinoviricota</taxon>
        <taxon>Tolucaviricetes</taxon>
        <taxon>Tolivirales</taxon>
        <taxon>Tombusviridae</taxon>
        <taxon>Procedovirinae</taxon>
        <taxon>Panicovirus</taxon>
        <taxon>Panicovirus panici</taxon>
    </lineage>
</organism>
<evidence type="ECO:0000255" key="1">
    <source>
        <dbReference type="PROSITE-ProRule" id="PRU00539"/>
    </source>
</evidence>
<evidence type="ECO:0000256" key="2">
    <source>
        <dbReference type="SAM" id="MobiDB-lite"/>
    </source>
</evidence>
<evidence type="ECO:0000269" key="3">
    <source>
    </source>
</evidence>
<evidence type="ECO:0000305" key="4"/>
<evidence type="ECO:0000305" key="5">
    <source>
    </source>
</evidence>
<gene>
    <name type="ORF">ORF1</name>
</gene>
<name>RDRP_PMVK</name>
<protein>
    <recommendedName>
        <fullName>RNA-directed RNA polymerase</fullName>
        <ecNumber>2.7.7.48</ecNumber>
    </recommendedName>
    <alternativeName>
        <fullName>Protein p112</fullName>
    </alternativeName>
    <component>
        <recommendedName>
            <fullName>Protein p48</fullName>
        </recommendedName>
    </component>
</protein>
<accession>P89034</accession>
<accession>P90334</accession>
<reference key="1">
    <citation type="journal article" date="1998" name="Virology">
        <title>Nucleotide sequence and infectivity of a full-length cDNA clone of panicum mosaic virus.</title>
        <authorList>
            <person name="Turina M."/>
            <person name="Maruoka M."/>
            <person name="Monis J."/>
            <person name="Jackson A.O."/>
            <person name="Scholthof K.B."/>
        </authorList>
    </citation>
    <scope>NUCLEOTIDE SEQUENCE [GENOMIC RNA]</scope>
</reference>
<reference key="2">
    <citation type="journal article" date="2006" name="Virol. J.">
        <title>Panicovirus accumulation is governed by two membrane-associated proteins with a newly identified conserved motif that contributes to pathogenicity.</title>
        <authorList>
            <person name="Batten J.S."/>
            <person name="Turina M."/>
            <person name="Scholthof K.B."/>
        </authorList>
    </citation>
    <scope>FUNCTION</scope>
    <scope>SUBCELLULAR LOCATION</scope>
</reference>
<dbReference type="EC" id="2.7.7.48"/>
<dbReference type="EMBL" id="U55002">
    <property type="protein sequence ID" value="AAC97551.1"/>
    <property type="molecule type" value="Genomic_RNA"/>
</dbReference>
<dbReference type="EMBL" id="U55002">
    <property type="protein sequence ID" value="AAC97552.1"/>
    <property type="molecule type" value="Genomic_RNA"/>
</dbReference>
<dbReference type="RefSeq" id="NP_068342.1">
    <property type="nucleotide sequence ID" value="NC_002598.1"/>
</dbReference>
<dbReference type="RefSeq" id="NP_068343.1">
    <property type="nucleotide sequence ID" value="NC_002598.1"/>
</dbReference>
<dbReference type="KEGG" id="vg:912246"/>
<dbReference type="KEGG" id="vg:912248"/>
<dbReference type="Proteomes" id="UP000001665">
    <property type="component" value="Segment"/>
</dbReference>
<dbReference type="GO" id="GO:0033644">
    <property type="term" value="C:host cell membrane"/>
    <property type="evidence" value="ECO:0007669"/>
    <property type="project" value="UniProtKB-SubCell"/>
</dbReference>
<dbReference type="GO" id="GO:0016020">
    <property type="term" value="C:membrane"/>
    <property type="evidence" value="ECO:0007669"/>
    <property type="project" value="UniProtKB-KW"/>
</dbReference>
<dbReference type="GO" id="GO:0000166">
    <property type="term" value="F:nucleotide binding"/>
    <property type="evidence" value="ECO:0007669"/>
    <property type="project" value="UniProtKB-KW"/>
</dbReference>
<dbReference type="GO" id="GO:0003723">
    <property type="term" value="F:RNA binding"/>
    <property type="evidence" value="ECO:0007669"/>
    <property type="project" value="InterPro"/>
</dbReference>
<dbReference type="GO" id="GO:0003968">
    <property type="term" value="F:RNA-directed RNA polymerase activity"/>
    <property type="evidence" value="ECO:0007669"/>
    <property type="project" value="UniProtKB-KW"/>
</dbReference>
<dbReference type="GO" id="GO:0039694">
    <property type="term" value="P:viral RNA genome replication"/>
    <property type="evidence" value="ECO:0007669"/>
    <property type="project" value="InterPro"/>
</dbReference>
<dbReference type="CDD" id="cd23238">
    <property type="entry name" value="Panicovirus_RdRp"/>
    <property type="match status" value="1"/>
</dbReference>
<dbReference type="Gene3D" id="3.30.70.270">
    <property type="match status" value="1"/>
</dbReference>
<dbReference type="InterPro" id="IPR043502">
    <property type="entry name" value="DNA/RNA_pol_sf"/>
</dbReference>
<dbReference type="InterPro" id="IPR043128">
    <property type="entry name" value="Rev_trsase/Diguanyl_cyclase"/>
</dbReference>
<dbReference type="InterPro" id="IPR007094">
    <property type="entry name" value="RNA-dir_pol_PSvirus"/>
</dbReference>
<dbReference type="InterPro" id="IPR002166">
    <property type="entry name" value="RNA_pol_HCV"/>
</dbReference>
<dbReference type="Pfam" id="PF00998">
    <property type="entry name" value="RdRP_3"/>
    <property type="match status" value="1"/>
</dbReference>
<dbReference type="SUPFAM" id="SSF56672">
    <property type="entry name" value="DNA/RNA polymerases"/>
    <property type="match status" value="1"/>
</dbReference>
<dbReference type="PROSITE" id="PS50507">
    <property type="entry name" value="RDRP_SSRNA_POS"/>
    <property type="match status" value="1"/>
</dbReference>
<feature type="chain" id="PRO_0000399486" description="RNA-directed RNA polymerase">
    <location>
        <begin position="1"/>
        <end position="992"/>
    </location>
</feature>
<feature type="chain" id="PRO_0000399487" description="Protein p48">
    <location>
        <begin position="1"/>
        <end position="425"/>
    </location>
</feature>
<feature type="domain" description="RdRp catalytic" evidence="1">
    <location>
        <begin position="656"/>
        <end position="772"/>
    </location>
</feature>
<feature type="region of interest" description="Disordered" evidence="2">
    <location>
        <begin position="963"/>
        <end position="992"/>
    </location>
</feature>
<feature type="compositionally biased region" description="Polar residues" evidence="2">
    <location>
        <begin position="964"/>
        <end position="974"/>
    </location>
</feature>